<comment type="function">
    <text evidence="1">Key component of the proton channel; it plays a direct role in the translocation of protons across the membrane.</text>
</comment>
<comment type="subunit">
    <text evidence="1">F-type ATPases have 2 components, CF(1) - the catalytic core - and CF(0) - the membrane proton channel. CF(1) has five subunits: alpha(3), beta(3), gamma(1), delta(1), epsilon(1). CF(0) has three main subunits: a(1), b(2) and c(9-12). The alpha and beta chains form an alternating ring which encloses part of the gamma chain. CF(1) is attached to CF(0) by a central stalk formed by the gamma and epsilon chains, while a peripheral stalk is formed by the delta and b chains.</text>
</comment>
<comment type="subcellular location">
    <subcellularLocation>
        <location evidence="1">Cell inner membrane</location>
        <topology evidence="1">Multi-pass membrane protein</topology>
    </subcellularLocation>
</comment>
<comment type="similarity">
    <text evidence="1">Belongs to the ATPase A chain family.</text>
</comment>
<name>ATP6_ECO5E</name>
<gene>
    <name evidence="1" type="primary">atpB</name>
    <name type="ordered locus">ECH74115_5174</name>
</gene>
<accession>B5YXE2</accession>
<reference key="1">
    <citation type="journal article" date="2011" name="Proc. Natl. Acad. Sci. U.S.A.">
        <title>Genomic anatomy of Escherichia coli O157:H7 outbreaks.</title>
        <authorList>
            <person name="Eppinger M."/>
            <person name="Mammel M.K."/>
            <person name="Leclerc J.E."/>
            <person name="Ravel J."/>
            <person name="Cebula T.A."/>
        </authorList>
    </citation>
    <scope>NUCLEOTIDE SEQUENCE [LARGE SCALE GENOMIC DNA]</scope>
    <source>
        <strain>EC4115 / EHEC</strain>
    </source>
</reference>
<proteinExistence type="inferred from homology"/>
<keyword id="KW-0066">ATP synthesis</keyword>
<keyword id="KW-0997">Cell inner membrane</keyword>
<keyword id="KW-1003">Cell membrane</keyword>
<keyword id="KW-0138">CF(0)</keyword>
<keyword id="KW-0375">Hydrogen ion transport</keyword>
<keyword id="KW-0406">Ion transport</keyword>
<keyword id="KW-0472">Membrane</keyword>
<keyword id="KW-0812">Transmembrane</keyword>
<keyword id="KW-1133">Transmembrane helix</keyword>
<keyword id="KW-0813">Transport</keyword>
<sequence>MASENMTPQDYIGHHLNNLQLDLRTFSLVDPQNPPATFWTINIDSMFFSVVLGLLFLVLFRSVAKKATSGVPGKFQTAIELVIGFVNGSVKDMYHGKSKLIAPLALTIFVWVFLMNLMDLLPIDLLPYIAEHVLGLPALRVVPSADVNVTLSMALGVFILILFYSIKMKGIGGFTKELTLQPFNHWAFIPVNLILEGVSLLSKPVSLGLRLFGNMYAGELIFILIAGLLPWWSQWILNVPWAIFHILIITLQAFIFMVLTIVYLSMASEEH</sequence>
<feature type="chain" id="PRO_1000145270" description="ATP synthase subunit a">
    <location>
        <begin position="1"/>
        <end position="271"/>
    </location>
</feature>
<feature type="transmembrane region" description="Helical" evidence="1">
    <location>
        <begin position="40"/>
        <end position="60"/>
    </location>
</feature>
<feature type="transmembrane region" description="Helical" evidence="1">
    <location>
        <begin position="100"/>
        <end position="120"/>
    </location>
</feature>
<feature type="transmembrane region" description="Helical" evidence="1">
    <location>
        <begin position="146"/>
        <end position="166"/>
    </location>
</feature>
<feature type="transmembrane region" description="Helical" evidence="1">
    <location>
        <begin position="220"/>
        <end position="240"/>
    </location>
</feature>
<feature type="transmembrane region" description="Helical" evidence="1">
    <location>
        <begin position="242"/>
        <end position="262"/>
    </location>
</feature>
<evidence type="ECO:0000255" key="1">
    <source>
        <dbReference type="HAMAP-Rule" id="MF_01393"/>
    </source>
</evidence>
<organism>
    <name type="scientific">Escherichia coli O157:H7 (strain EC4115 / EHEC)</name>
    <dbReference type="NCBI Taxonomy" id="444450"/>
    <lineage>
        <taxon>Bacteria</taxon>
        <taxon>Pseudomonadati</taxon>
        <taxon>Pseudomonadota</taxon>
        <taxon>Gammaproteobacteria</taxon>
        <taxon>Enterobacterales</taxon>
        <taxon>Enterobacteriaceae</taxon>
        <taxon>Escherichia</taxon>
    </lineage>
</organism>
<dbReference type="EMBL" id="CP001164">
    <property type="protein sequence ID" value="ACI36008.1"/>
    <property type="molecule type" value="Genomic_DNA"/>
</dbReference>
<dbReference type="RefSeq" id="WP_000135625.1">
    <property type="nucleotide sequence ID" value="NC_011353.1"/>
</dbReference>
<dbReference type="SMR" id="B5YXE2"/>
<dbReference type="GeneID" id="93778229"/>
<dbReference type="KEGG" id="ecf:ECH74115_5174"/>
<dbReference type="HOGENOM" id="CLU_041018_1_0_6"/>
<dbReference type="GO" id="GO:0005886">
    <property type="term" value="C:plasma membrane"/>
    <property type="evidence" value="ECO:0007669"/>
    <property type="project" value="UniProtKB-SubCell"/>
</dbReference>
<dbReference type="GO" id="GO:0045259">
    <property type="term" value="C:proton-transporting ATP synthase complex"/>
    <property type="evidence" value="ECO:0007669"/>
    <property type="project" value="UniProtKB-KW"/>
</dbReference>
<dbReference type="GO" id="GO:0046933">
    <property type="term" value="F:proton-transporting ATP synthase activity, rotational mechanism"/>
    <property type="evidence" value="ECO:0007669"/>
    <property type="project" value="UniProtKB-UniRule"/>
</dbReference>
<dbReference type="GO" id="GO:0042777">
    <property type="term" value="P:proton motive force-driven plasma membrane ATP synthesis"/>
    <property type="evidence" value="ECO:0007669"/>
    <property type="project" value="TreeGrafter"/>
</dbReference>
<dbReference type="CDD" id="cd00310">
    <property type="entry name" value="ATP-synt_Fo_a_6"/>
    <property type="match status" value="1"/>
</dbReference>
<dbReference type="FunFam" id="1.20.120.220:FF:000002">
    <property type="entry name" value="ATP synthase subunit a"/>
    <property type="match status" value="1"/>
</dbReference>
<dbReference type="Gene3D" id="1.20.120.220">
    <property type="entry name" value="ATP synthase, F0 complex, subunit A"/>
    <property type="match status" value="1"/>
</dbReference>
<dbReference type="HAMAP" id="MF_01393">
    <property type="entry name" value="ATP_synth_a_bact"/>
    <property type="match status" value="1"/>
</dbReference>
<dbReference type="InterPro" id="IPR045082">
    <property type="entry name" value="ATP_syn_F0_a_bact/chloroplast"/>
</dbReference>
<dbReference type="InterPro" id="IPR000568">
    <property type="entry name" value="ATP_synth_F0_asu"/>
</dbReference>
<dbReference type="InterPro" id="IPR023011">
    <property type="entry name" value="ATP_synth_F0_asu_AS"/>
</dbReference>
<dbReference type="InterPro" id="IPR035908">
    <property type="entry name" value="F0_ATP_A_sf"/>
</dbReference>
<dbReference type="NCBIfam" id="TIGR01131">
    <property type="entry name" value="ATP_synt_6_or_A"/>
    <property type="match status" value="1"/>
</dbReference>
<dbReference type="NCBIfam" id="NF004477">
    <property type="entry name" value="PRK05815.1-1"/>
    <property type="match status" value="1"/>
</dbReference>
<dbReference type="PANTHER" id="PTHR42823">
    <property type="entry name" value="ATP SYNTHASE SUBUNIT A, CHLOROPLASTIC"/>
    <property type="match status" value="1"/>
</dbReference>
<dbReference type="PANTHER" id="PTHR42823:SF3">
    <property type="entry name" value="ATP SYNTHASE SUBUNIT A, CHLOROPLASTIC"/>
    <property type="match status" value="1"/>
</dbReference>
<dbReference type="Pfam" id="PF00119">
    <property type="entry name" value="ATP-synt_A"/>
    <property type="match status" value="1"/>
</dbReference>
<dbReference type="PRINTS" id="PR00123">
    <property type="entry name" value="ATPASEA"/>
</dbReference>
<dbReference type="SUPFAM" id="SSF81336">
    <property type="entry name" value="F1F0 ATP synthase subunit A"/>
    <property type="match status" value="1"/>
</dbReference>
<dbReference type="PROSITE" id="PS00449">
    <property type="entry name" value="ATPASE_A"/>
    <property type="match status" value="1"/>
</dbReference>
<protein>
    <recommendedName>
        <fullName evidence="1">ATP synthase subunit a</fullName>
    </recommendedName>
    <alternativeName>
        <fullName evidence="1">ATP synthase F0 sector subunit a</fullName>
    </alternativeName>
    <alternativeName>
        <fullName evidence="1">F-ATPase subunit 6</fullName>
    </alternativeName>
</protein>